<feature type="chain" id="PRO_1000186658" description="4-hydroxybenzoate octaprenyltransferase">
    <location>
        <begin position="1"/>
        <end position="287"/>
    </location>
</feature>
<feature type="transmembrane region" description="Helical" evidence="1">
    <location>
        <begin position="41"/>
        <end position="61"/>
    </location>
</feature>
<feature type="transmembrane region" description="Helical" evidence="1">
    <location>
        <begin position="92"/>
        <end position="112"/>
    </location>
</feature>
<feature type="transmembrane region" description="Helical" evidence="1">
    <location>
        <begin position="133"/>
        <end position="153"/>
    </location>
</feature>
<feature type="transmembrane region" description="Helical" evidence="1">
    <location>
        <begin position="160"/>
        <end position="180"/>
    </location>
</feature>
<feature type="transmembrane region" description="Helical" evidence="1">
    <location>
        <begin position="197"/>
        <end position="217"/>
    </location>
</feature>
<feature type="transmembrane region" description="Helical" evidence="1">
    <location>
        <begin position="267"/>
        <end position="287"/>
    </location>
</feature>
<gene>
    <name evidence="1" type="primary">ubiA</name>
    <name type="ordered locus">Bphy_2519</name>
</gene>
<dbReference type="EC" id="2.5.1.39" evidence="1"/>
<dbReference type="EMBL" id="CP001043">
    <property type="protein sequence ID" value="ACC71691.1"/>
    <property type="molecule type" value="Genomic_DNA"/>
</dbReference>
<dbReference type="RefSeq" id="WP_012401895.1">
    <property type="nucleotide sequence ID" value="NC_010622.1"/>
</dbReference>
<dbReference type="SMR" id="B2JGG3"/>
<dbReference type="STRING" id="391038.Bphy_2519"/>
<dbReference type="KEGG" id="bph:Bphy_2519"/>
<dbReference type="eggNOG" id="COG0382">
    <property type="taxonomic scope" value="Bacteria"/>
</dbReference>
<dbReference type="HOGENOM" id="CLU_034879_1_0_4"/>
<dbReference type="OrthoDB" id="9782418at2"/>
<dbReference type="UniPathway" id="UPA00232"/>
<dbReference type="Proteomes" id="UP000001192">
    <property type="component" value="Chromosome 1"/>
</dbReference>
<dbReference type="GO" id="GO:0005886">
    <property type="term" value="C:plasma membrane"/>
    <property type="evidence" value="ECO:0007669"/>
    <property type="project" value="UniProtKB-SubCell"/>
</dbReference>
<dbReference type="GO" id="GO:0008412">
    <property type="term" value="F:4-hydroxybenzoate polyprenyltransferase activity"/>
    <property type="evidence" value="ECO:0007669"/>
    <property type="project" value="UniProtKB-UniRule"/>
</dbReference>
<dbReference type="GO" id="GO:0006744">
    <property type="term" value="P:ubiquinone biosynthetic process"/>
    <property type="evidence" value="ECO:0007669"/>
    <property type="project" value="UniProtKB-UniRule"/>
</dbReference>
<dbReference type="CDD" id="cd13959">
    <property type="entry name" value="PT_UbiA_COQ2"/>
    <property type="match status" value="1"/>
</dbReference>
<dbReference type="FunFam" id="1.10.357.140:FF:000002">
    <property type="entry name" value="4-hydroxybenzoate octaprenyltransferase"/>
    <property type="match status" value="1"/>
</dbReference>
<dbReference type="FunFam" id="1.20.120.1780:FF:000001">
    <property type="entry name" value="4-hydroxybenzoate octaprenyltransferase"/>
    <property type="match status" value="1"/>
</dbReference>
<dbReference type="Gene3D" id="1.10.357.140">
    <property type="entry name" value="UbiA prenyltransferase"/>
    <property type="match status" value="1"/>
</dbReference>
<dbReference type="Gene3D" id="1.20.120.1780">
    <property type="entry name" value="UbiA prenyltransferase"/>
    <property type="match status" value="1"/>
</dbReference>
<dbReference type="HAMAP" id="MF_01635">
    <property type="entry name" value="UbiA"/>
    <property type="match status" value="1"/>
</dbReference>
<dbReference type="InterPro" id="IPR006370">
    <property type="entry name" value="HB_polyprenyltransferase-like"/>
</dbReference>
<dbReference type="InterPro" id="IPR039653">
    <property type="entry name" value="Prenyltransferase"/>
</dbReference>
<dbReference type="InterPro" id="IPR000537">
    <property type="entry name" value="UbiA_prenyltransferase"/>
</dbReference>
<dbReference type="InterPro" id="IPR030470">
    <property type="entry name" value="UbiA_prenylTrfase_CS"/>
</dbReference>
<dbReference type="InterPro" id="IPR044878">
    <property type="entry name" value="UbiA_sf"/>
</dbReference>
<dbReference type="NCBIfam" id="TIGR01474">
    <property type="entry name" value="ubiA_proteo"/>
    <property type="match status" value="1"/>
</dbReference>
<dbReference type="PANTHER" id="PTHR11048:SF28">
    <property type="entry name" value="4-HYDROXYBENZOATE POLYPRENYLTRANSFERASE, MITOCHONDRIAL"/>
    <property type="match status" value="1"/>
</dbReference>
<dbReference type="PANTHER" id="PTHR11048">
    <property type="entry name" value="PRENYLTRANSFERASES"/>
    <property type="match status" value="1"/>
</dbReference>
<dbReference type="Pfam" id="PF01040">
    <property type="entry name" value="UbiA"/>
    <property type="match status" value="1"/>
</dbReference>
<dbReference type="PROSITE" id="PS00943">
    <property type="entry name" value="UBIA"/>
    <property type="match status" value="1"/>
</dbReference>
<protein>
    <recommendedName>
        <fullName evidence="1">4-hydroxybenzoate octaprenyltransferase</fullName>
        <ecNumber evidence="1">2.5.1.39</ecNumber>
    </recommendedName>
    <alternativeName>
        <fullName evidence="1">4-HB polyprenyltransferase</fullName>
    </alternativeName>
</protein>
<comment type="function">
    <text evidence="1">Catalyzes the prenylation of para-hydroxybenzoate (PHB) with an all-trans polyprenyl group. Mediates the second step in the final reaction sequence of ubiquinone-8 (UQ-8) biosynthesis, which is the condensation of the polyisoprenoid side chain with PHB, generating the first membrane-bound Q intermediate 3-octaprenyl-4-hydroxybenzoate.</text>
</comment>
<comment type="catalytic activity">
    <reaction evidence="1">
        <text>all-trans-octaprenyl diphosphate + 4-hydroxybenzoate = 4-hydroxy-3-(all-trans-octaprenyl)benzoate + diphosphate</text>
        <dbReference type="Rhea" id="RHEA:27782"/>
        <dbReference type="ChEBI" id="CHEBI:1617"/>
        <dbReference type="ChEBI" id="CHEBI:17879"/>
        <dbReference type="ChEBI" id="CHEBI:33019"/>
        <dbReference type="ChEBI" id="CHEBI:57711"/>
        <dbReference type="EC" id="2.5.1.39"/>
    </reaction>
</comment>
<comment type="cofactor">
    <cofactor evidence="1">
        <name>Mg(2+)</name>
        <dbReference type="ChEBI" id="CHEBI:18420"/>
    </cofactor>
</comment>
<comment type="pathway">
    <text evidence="1">Cofactor biosynthesis; ubiquinone biosynthesis.</text>
</comment>
<comment type="subcellular location">
    <subcellularLocation>
        <location evidence="1">Cell inner membrane</location>
        <topology evidence="1">Multi-pass membrane protein</topology>
    </subcellularLocation>
</comment>
<comment type="similarity">
    <text evidence="1">Belongs to the UbiA prenyltransferase family.</text>
</comment>
<organism>
    <name type="scientific">Paraburkholderia phymatum (strain DSM 17167 / CIP 108236 / LMG 21445 / STM815)</name>
    <name type="common">Burkholderia phymatum</name>
    <dbReference type="NCBI Taxonomy" id="391038"/>
    <lineage>
        <taxon>Bacteria</taxon>
        <taxon>Pseudomonadati</taxon>
        <taxon>Pseudomonadota</taxon>
        <taxon>Betaproteobacteria</taxon>
        <taxon>Burkholderiales</taxon>
        <taxon>Burkholderiaceae</taxon>
        <taxon>Paraburkholderia</taxon>
    </lineage>
</organism>
<proteinExistence type="inferred from homology"/>
<keyword id="KW-0997">Cell inner membrane</keyword>
<keyword id="KW-1003">Cell membrane</keyword>
<keyword id="KW-0460">Magnesium</keyword>
<keyword id="KW-0472">Membrane</keyword>
<keyword id="KW-1185">Reference proteome</keyword>
<keyword id="KW-0808">Transferase</keyword>
<keyword id="KW-0812">Transmembrane</keyword>
<keyword id="KW-1133">Transmembrane helix</keyword>
<keyword id="KW-0831">Ubiquinone biosynthesis</keyword>
<name>UBIA_PARP8</name>
<accession>B2JGG3</accession>
<sequence>MFARLPLYLRLVRMDKPIGSLLLLWPTLNALWIASDGHPSVSLLVIFALGTILMRSAGCAINDYADRDFDRYVKRTENRPITSGKIKAWEAVALAAGLSLVAFLLILPLNALTKELSVAALFVAGTYPFTKRFFAIPQAYLGIAFGFGIPMAFAAVQNQVPLLAWVMLIANVFWSVAYDTEYAMVDRDDDIKIGIRTSALTFGRFDVLAIMLCYAVTLGIYVGIGFTLGFGVLYWIGLAAAAGCAVYHYTLIKGRERMPCFAAFRHNNWLGGALFAGIAAHYAAQAF</sequence>
<reference key="1">
    <citation type="journal article" date="2014" name="Stand. Genomic Sci.">
        <title>Complete genome sequence of Burkholderia phymatum STM815(T), a broad host range and efficient nitrogen-fixing symbiont of Mimosa species.</title>
        <authorList>
            <person name="Moulin L."/>
            <person name="Klonowska A."/>
            <person name="Caroline B."/>
            <person name="Booth K."/>
            <person name="Vriezen J.A."/>
            <person name="Melkonian R."/>
            <person name="James E.K."/>
            <person name="Young J.P."/>
            <person name="Bena G."/>
            <person name="Hauser L."/>
            <person name="Land M."/>
            <person name="Kyrpides N."/>
            <person name="Bruce D."/>
            <person name="Chain P."/>
            <person name="Copeland A."/>
            <person name="Pitluck S."/>
            <person name="Woyke T."/>
            <person name="Lizotte-Waniewski M."/>
            <person name="Bristow J."/>
            <person name="Riley M."/>
        </authorList>
    </citation>
    <scope>NUCLEOTIDE SEQUENCE [LARGE SCALE GENOMIC DNA]</scope>
    <source>
        <strain>DSM 17167 / CIP 108236 / LMG 21445 / STM815</strain>
    </source>
</reference>
<evidence type="ECO:0000255" key="1">
    <source>
        <dbReference type="HAMAP-Rule" id="MF_01635"/>
    </source>
</evidence>